<sequence length="180" mass="20409">MQEKAVVLDDQMIRRALTRISHEIVERNKGVDNCVLVGIKTRGIFIAQRLAERIGQIEGKEMEVGELDITLYRDDLTLQSKNKEPLVKGSDIPVDITKKKVILVDDVLYTGRTVRAAMDALMDLGRPSQIQLAVLVDRGHRELPIRADYVGKNIPTSSEERIEVDLQETDQQDRVSIYDK</sequence>
<protein>
    <recommendedName>
        <fullName evidence="1">Bifunctional protein PyrR</fullName>
    </recommendedName>
    <domain>
        <recommendedName>
            <fullName evidence="1">Pyrimidine operon regulatory protein</fullName>
        </recommendedName>
    </domain>
    <domain>
        <recommendedName>
            <fullName evidence="1">Uracil phosphoribosyltransferase</fullName>
            <shortName evidence="1">UPRTase</shortName>
            <ecNumber evidence="1">2.4.2.9</ecNumber>
        </recommendedName>
    </domain>
</protein>
<gene>
    <name evidence="1" type="primary">pyrR</name>
    <name type="ordered locus">BAA_4055</name>
</gene>
<comment type="function">
    <text evidence="1">Regulates transcriptional attenuation of the pyrimidine nucleotide (pyr) operon by binding in a uridine-dependent manner to specific sites on pyr mRNA. This disrupts an antiterminator hairpin in the RNA and favors formation of a downstream transcription terminator, leading to a reduced expression of downstream genes.</text>
</comment>
<comment type="function">
    <text evidence="1">Also displays a weak uracil phosphoribosyltransferase activity which is not physiologically significant.</text>
</comment>
<comment type="catalytic activity">
    <reaction evidence="1">
        <text>UMP + diphosphate = 5-phospho-alpha-D-ribose 1-diphosphate + uracil</text>
        <dbReference type="Rhea" id="RHEA:13017"/>
        <dbReference type="ChEBI" id="CHEBI:17568"/>
        <dbReference type="ChEBI" id="CHEBI:33019"/>
        <dbReference type="ChEBI" id="CHEBI:57865"/>
        <dbReference type="ChEBI" id="CHEBI:58017"/>
        <dbReference type="EC" id="2.4.2.9"/>
    </reaction>
</comment>
<comment type="subunit">
    <text evidence="1">Homodimer and homohexamer; in equilibrium.</text>
</comment>
<comment type="similarity">
    <text evidence="1">Belongs to the purine/pyrimidine phosphoribosyltransferase family. PyrR subfamily.</text>
</comment>
<reference key="1">
    <citation type="submission" date="2009-04" db="EMBL/GenBank/DDBJ databases">
        <title>Genome sequence of Bacillus anthracis A0248.</title>
        <authorList>
            <person name="Dodson R.J."/>
            <person name="Munk A.C."/>
            <person name="Bruce D."/>
            <person name="Detter C."/>
            <person name="Tapia R."/>
            <person name="Sutton G."/>
            <person name="Sims D."/>
            <person name="Brettin T."/>
        </authorList>
    </citation>
    <scope>NUCLEOTIDE SEQUENCE [LARGE SCALE GENOMIC DNA]</scope>
    <source>
        <strain>A0248</strain>
    </source>
</reference>
<keyword id="KW-0328">Glycosyltransferase</keyword>
<keyword id="KW-0694">RNA-binding</keyword>
<keyword id="KW-0804">Transcription</keyword>
<keyword id="KW-0805">Transcription regulation</keyword>
<keyword id="KW-0806">Transcription termination</keyword>
<keyword id="KW-0808">Transferase</keyword>
<proteinExistence type="inferred from homology"/>
<feature type="chain" id="PRO_1000164841" description="Bifunctional protein PyrR">
    <location>
        <begin position="1"/>
        <end position="180"/>
    </location>
</feature>
<feature type="short sequence motif" description="PRPP-binding" evidence="1">
    <location>
        <begin position="101"/>
        <end position="113"/>
    </location>
</feature>
<dbReference type="EC" id="2.4.2.9" evidence="1"/>
<dbReference type="EMBL" id="CP001598">
    <property type="protein sequence ID" value="ACQ47439.1"/>
    <property type="molecule type" value="Genomic_DNA"/>
</dbReference>
<dbReference type="RefSeq" id="WP_001156491.1">
    <property type="nucleotide sequence ID" value="NC_012659.1"/>
</dbReference>
<dbReference type="SMR" id="C3P661"/>
<dbReference type="GeneID" id="75087028"/>
<dbReference type="KEGG" id="bai:BAA_4055"/>
<dbReference type="HOGENOM" id="CLU_094234_2_1_9"/>
<dbReference type="GO" id="GO:0003723">
    <property type="term" value="F:RNA binding"/>
    <property type="evidence" value="ECO:0007669"/>
    <property type="project" value="UniProtKB-UniRule"/>
</dbReference>
<dbReference type="GO" id="GO:0004845">
    <property type="term" value="F:uracil phosphoribosyltransferase activity"/>
    <property type="evidence" value="ECO:0007669"/>
    <property type="project" value="UniProtKB-UniRule"/>
</dbReference>
<dbReference type="GO" id="GO:0006353">
    <property type="term" value="P:DNA-templated transcription termination"/>
    <property type="evidence" value="ECO:0007669"/>
    <property type="project" value="UniProtKB-UniRule"/>
</dbReference>
<dbReference type="CDD" id="cd06223">
    <property type="entry name" value="PRTases_typeI"/>
    <property type="match status" value="1"/>
</dbReference>
<dbReference type="FunFam" id="3.40.50.2020:FF:000020">
    <property type="entry name" value="Bifunctional protein PyrR"/>
    <property type="match status" value="1"/>
</dbReference>
<dbReference type="Gene3D" id="3.40.50.2020">
    <property type="match status" value="1"/>
</dbReference>
<dbReference type="HAMAP" id="MF_01219">
    <property type="entry name" value="PyrR"/>
    <property type="match status" value="1"/>
</dbReference>
<dbReference type="InterPro" id="IPR000836">
    <property type="entry name" value="PRibTrfase_dom"/>
</dbReference>
<dbReference type="InterPro" id="IPR029057">
    <property type="entry name" value="PRTase-like"/>
</dbReference>
<dbReference type="InterPro" id="IPR023050">
    <property type="entry name" value="PyrR"/>
</dbReference>
<dbReference type="InterPro" id="IPR050137">
    <property type="entry name" value="PyrR_bifunctional"/>
</dbReference>
<dbReference type="NCBIfam" id="NF003545">
    <property type="entry name" value="PRK05205.1-1"/>
    <property type="match status" value="1"/>
</dbReference>
<dbReference type="NCBIfam" id="NF003547">
    <property type="entry name" value="PRK05205.1-3"/>
    <property type="match status" value="1"/>
</dbReference>
<dbReference type="NCBIfam" id="NF003548">
    <property type="entry name" value="PRK05205.1-4"/>
    <property type="match status" value="1"/>
</dbReference>
<dbReference type="NCBIfam" id="NF003549">
    <property type="entry name" value="PRK05205.1-5"/>
    <property type="match status" value="1"/>
</dbReference>
<dbReference type="PANTHER" id="PTHR11608">
    <property type="entry name" value="BIFUNCTIONAL PROTEIN PYRR"/>
    <property type="match status" value="1"/>
</dbReference>
<dbReference type="PANTHER" id="PTHR11608:SF0">
    <property type="entry name" value="BIFUNCTIONAL PROTEIN PYRR"/>
    <property type="match status" value="1"/>
</dbReference>
<dbReference type="Pfam" id="PF00156">
    <property type="entry name" value="Pribosyltran"/>
    <property type="match status" value="1"/>
</dbReference>
<dbReference type="SUPFAM" id="SSF53271">
    <property type="entry name" value="PRTase-like"/>
    <property type="match status" value="1"/>
</dbReference>
<name>PYRR_BACAA</name>
<evidence type="ECO:0000255" key="1">
    <source>
        <dbReference type="HAMAP-Rule" id="MF_01219"/>
    </source>
</evidence>
<accession>C3P661</accession>
<organism>
    <name type="scientific">Bacillus anthracis (strain A0248)</name>
    <dbReference type="NCBI Taxonomy" id="592021"/>
    <lineage>
        <taxon>Bacteria</taxon>
        <taxon>Bacillati</taxon>
        <taxon>Bacillota</taxon>
        <taxon>Bacilli</taxon>
        <taxon>Bacillales</taxon>
        <taxon>Bacillaceae</taxon>
        <taxon>Bacillus</taxon>
        <taxon>Bacillus cereus group</taxon>
    </lineage>
</organism>